<comment type="function">
    <text evidence="1">Necessary for normal cell division and for the maintenance of normal septation.</text>
</comment>
<comment type="cofactor">
    <cofactor evidence="1">
        <name>Mg(2+)</name>
        <dbReference type="ChEBI" id="CHEBI:18420"/>
    </cofactor>
</comment>
<comment type="similarity">
    <text evidence="1">Belongs to the TRAFAC class TrmE-Era-EngA-EngB-Septin-like GTPase superfamily. EngB GTPase family.</text>
</comment>
<sequence length="205" mass="23352">MKIKEAEFVISAVKGEQYPEDNLPEVALVGRSNVGKSSLINKLCNRRHLARTSSTPGKTQTLNFYRINQAAYIVDLPGYGYASVSKTQRASWGPMMEHYLKKRLQLRGVIQLVDIRHPPTKDDIAMREWLNHFKIGAAVIATKADKINRGRYAKHVKQIRQDLAIPKEIPIIVFSAETGHGKEDVLDLLDYFWNGIQPEEEREIL</sequence>
<evidence type="ECO:0000255" key="1">
    <source>
        <dbReference type="HAMAP-Rule" id="MF_00321"/>
    </source>
</evidence>
<dbReference type="EMBL" id="CP000930">
    <property type="protein sequence ID" value="ABZ83089.1"/>
    <property type="molecule type" value="Genomic_DNA"/>
</dbReference>
<dbReference type="RefSeq" id="WP_012281465.1">
    <property type="nucleotide sequence ID" value="NC_010337.2"/>
</dbReference>
<dbReference type="SMR" id="B0TFJ0"/>
<dbReference type="STRING" id="498761.HM1_0475"/>
<dbReference type="KEGG" id="hmo:HM1_0475"/>
<dbReference type="eggNOG" id="COG0218">
    <property type="taxonomic scope" value="Bacteria"/>
</dbReference>
<dbReference type="HOGENOM" id="CLU_033732_3_0_9"/>
<dbReference type="OrthoDB" id="9804921at2"/>
<dbReference type="Proteomes" id="UP000008550">
    <property type="component" value="Chromosome"/>
</dbReference>
<dbReference type="GO" id="GO:0005829">
    <property type="term" value="C:cytosol"/>
    <property type="evidence" value="ECO:0007669"/>
    <property type="project" value="TreeGrafter"/>
</dbReference>
<dbReference type="GO" id="GO:0005525">
    <property type="term" value="F:GTP binding"/>
    <property type="evidence" value="ECO:0007669"/>
    <property type="project" value="UniProtKB-UniRule"/>
</dbReference>
<dbReference type="GO" id="GO:0046872">
    <property type="term" value="F:metal ion binding"/>
    <property type="evidence" value="ECO:0007669"/>
    <property type="project" value="UniProtKB-KW"/>
</dbReference>
<dbReference type="GO" id="GO:0000917">
    <property type="term" value="P:division septum assembly"/>
    <property type="evidence" value="ECO:0007669"/>
    <property type="project" value="UniProtKB-KW"/>
</dbReference>
<dbReference type="CDD" id="cd01876">
    <property type="entry name" value="YihA_EngB"/>
    <property type="match status" value="1"/>
</dbReference>
<dbReference type="FunFam" id="3.40.50.300:FF:000098">
    <property type="entry name" value="Probable GTP-binding protein EngB"/>
    <property type="match status" value="1"/>
</dbReference>
<dbReference type="Gene3D" id="3.40.50.300">
    <property type="entry name" value="P-loop containing nucleotide triphosphate hydrolases"/>
    <property type="match status" value="1"/>
</dbReference>
<dbReference type="HAMAP" id="MF_00321">
    <property type="entry name" value="GTPase_EngB"/>
    <property type="match status" value="1"/>
</dbReference>
<dbReference type="InterPro" id="IPR030393">
    <property type="entry name" value="G_ENGB_dom"/>
</dbReference>
<dbReference type="InterPro" id="IPR006073">
    <property type="entry name" value="GTP-bd"/>
</dbReference>
<dbReference type="InterPro" id="IPR019987">
    <property type="entry name" value="GTP-bd_ribosome_bio_YsxC"/>
</dbReference>
<dbReference type="InterPro" id="IPR027417">
    <property type="entry name" value="P-loop_NTPase"/>
</dbReference>
<dbReference type="NCBIfam" id="TIGR03598">
    <property type="entry name" value="GTPase_YsxC"/>
    <property type="match status" value="1"/>
</dbReference>
<dbReference type="PANTHER" id="PTHR11649:SF13">
    <property type="entry name" value="ENGB-TYPE G DOMAIN-CONTAINING PROTEIN"/>
    <property type="match status" value="1"/>
</dbReference>
<dbReference type="PANTHER" id="PTHR11649">
    <property type="entry name" value="MSS1/TRME-RELATED GTP-BINDING PROTEIN"/>
    <property type="match status" value="1"/>
</dbReference>
<dbReference type="Pfam" id="PF01926">
    <property type="entry name" value="MMR_HSR1"/>
    <property type="match status" value="1"/>
</dbReference>
<dbReference type="SUPFAM" id="SSF52540">
    <property type="entry name" value="P-loop containing nucleoside triphosphate hydrolases"/>
    <property type="match status" value="1"/>
</dbReference>
<dbReference type="PROSITE" id="PS51706">
    <property type="entry name" value="G_ENGB"/>
    <property type="match status" value="1"/>
</dbReference>
<gene>
    <name evidence="1" type="primary">engB</name>
    <name type="ordered locus">Helmi_02950</name>
    <name type="ORF">HM1_0475</name>
</gene>
<protein>
    <recommendedName>
        <fullName evidence="1">Probable GTP-binding protein EngB</fullName>
    </recommendedName>
</protein>
<accession>B0TFJ0</accession>
<feature type="chain" id="PRO_1000115977" description="Probable GTP-binding protein EngB">
    <location>
        <begin position="1"/>
        <end position="205"/>
    </location>
</feature>
<feature type="domain" description="EngB-type G" evidence="1">
    <location>
        <begin position="22"/>
        <end position="195"/>
    </location>
</feature>
<feature type="binding site" evidence="1">
    <location>
        <begin position="30"/>
        <end position="37"/>
    </location>
    <ligand>
        <name>GTP</name>
        <dbReference type="ChEBI" id="CHEBI:37565"/>
    </ligand>
</feature>
<feature type="binding site" evidence="1">
    <location>
        <position position="37"/>
    </location>
    <ligand>
        <name>Mg(2+)</name>
        <dbReference type="ChEBI" id="CHEBI:18420"/>
    </ligand>
</feature>
<feature type="binding site" evidence="1">
    <location>
        <begin position="57"/>
        <end position="61"/>
    </location>
    <ligand>
        <name>GTP</name>
        <dbReference type="ChEBI" id="CHEBI:37565"/>
    </ligand>
</feature>
<feature type="binding site" evidence="1">
    <location>
        <position position="59"/>
    </location>
    <ligand>
        <name>Mg(2+)</name>
        <dbReference type="ChEBI" id="CHEBI:18420"/>
    </ligand>
</feature>
<feature type="binding site" evidence="1">
    <location>
        <begin position="75"/>
        <end position="78"/>
    </location>
    <ligand>
        <name>GTP</name>
        <dbReference type="ChEBI" id="CHEBI:37565"/>
    </ligand>
</feature>
<feature type="binding site" evidence="1">
    <location>
        <begin position="142"/>
        <end position="145"/>
    </location>
    <ligand>
        <name>GTP</name>
        <dbReference type="ChEBI" id="CHEBI:37565"/>
    </ligand>
</feature>
<feature type="binding site" evidence="1">
    <location>
        <begin position="174"/>
        <end position="176"/>
    </location>
    <ligand>
        <name>GTP</name>
        <dbReference type="ChEBI" id="CHEBI:37565"/>
    </ligand>
</feature>
<proteinExistence type="inferred from homology"/>
<name>ENGB_HELMI</name>
<organism>
    <name type="scientific">Heliobacterium modesticaldum (strain ATCC 51547 / Ice1)</name>
    <dbReference type="NCBI Taxonomy" id="498761"/>
    <lineage>
        <taxon>Bacteria</taxon>
        <taxon>Bacillati</taxon>
        <taxon>Bacillota</taxon>
        <taxon>Clostridia</taxon>
        <taxon>Eubacteriales</taxon>
        <taxon>Heliobacteriaceae</taxon>
        <taxon>Heliomicrobium</taxon>
    </lineage>
</organism>
<keyword id="KW-0131">Cell cycle</keyword>
<keyword id="KW-0132">Cell division</keyword>
<keyword id="KW-0342">GTP-binding</keyword>
<keyword id="KW-0460">Magnesium</keyword>
<keyword id="KW-0479">Metal-binding</keyword>
<keyword id="KW-0547">Nucleotide-binding</keyword>
<keyword id="KW-1185">Reference proteome</keyword>
<keyword id="KW-0717">Septation</keyword>
<reference key="1">
    <citation type="journal article" date="2008" name="J. Bacteriol.">
        <title>The genome of Heliobacterium modesticaldum, a phototrophic representative of the Firmicutes containing the simplest photosynthetic apparatus.</title>
        <authorList>
            <person name="Sattley W.M."/>
            <person name="Madigan M.T."/>
            <person name="Swingley W.D."/>
            <person name="Cheung P.C."/>
            <person name="Clocksin K.M."/>
            <person name="Conrad A.L."/>
            <person name="Dejesa L.C."/>
            <person name="Honchak B.M."/>
            <person name="Jung D.O."/>
            <person name="Karbach L.E."/>
            <person name="Kurdoglu A."/>
            <person name="Lahiri S."/>
            <person name="Mastrian S.D."/>
            <person name="Page L.E."/>
            <person name="Taylor H.L."/>
            <person name="Wang Z.T."/>
            <person name="Raymond J."/>
            <person name="Chen M."/>
            <person name="Blankenship R.E."/>
            <person name="Touchman J.W."/>
        </authorList>
    </citation>
    <scope>NUCLEOTIDE SEQUENCE [LARGE SCALE GENOMIC DNA]</scope>
    <source>
        <strain>ATCC 51547 / Ice1</strain>
    </source>
</reference>